<evidence type="ECO:0000255" key="1">
    <source>
        <dbReference type="HAMAP-Rule" id="MF_02008"/>
    </source>
</evidence>
<feature type="chain" id="PRO_1000088727" description="Tyrosine--tRNA ligase">
    <location>
        <begin position="1"/>
        <end position="319"/>
    </location>
</feature>
<feature type="short sequence motif" description="'HIGH' region">
    <location>
        <begin position="40"/>
        <end position="48"/>
    </location>
</feature>
<feature type="short sequence motif" description="'KMSKS' region">
    <location>
        <begin position="213"/>
        <end position="217"/>
    </location>
</feature>
<feature type="binding site" evidence="1">
    <location>
        <position position="35"/>
    </location>
    <ligand>
        <name>L-tyrosine</name>
        <dbReference type="ChEBI" id="CHEBI:58315"/>
    </ligand>
</feature>
<feature type="binding site" evidence="1">
    <location>
        <position position="156"/>
    </location>
    <ligand>
        <name>L-tyrosine</name>
        <dbReference type="ChEBI" id="CHEBI:58315"/>
    </ligand>
</feature>
<feature type="binding site" evidence="1">
    <location>
        <position position="160"/>
    </location>
    <ligand>
        <name>L-tyrosine</name>
        <dbReference type="ChEBI" id="CHEBI:58315"/>
    </ligand>
</feature>
<feature type="binding site" evidence="1">
    <location>
        <position position="163"/>
    </location>
    <ligand>
        <name>L-tyrosine</name>
        <dbReference type="ChEBI" id="CHEBI:58315"/>
    </ligand>
</feature>
<feature type="binding site" evidence="1">
    <location>
        <position position="178"/>
    </location>
    <ligand>
        <name>L-tyrosine</name>
        <dbReference type="ChEBI" id="CHEBI:58315"/>
    </ligand>
</feature>
<feature type="binding site" evidence="1">
    <location>
        <position position="216"/>
    </location>
    <ligand>
        <name>ATP</name>
        <dbReference type="ChEBI" id="CHEBI:30616"/>
    </ligand>
</feature>
<keyword id="KW-0030">Aminoacyl-tRNA synthetase</keyword>
<keyword id="KW-0067">ATP-binding</keyword>
<keyword id="KW-0963">Cytoplasm</keyword>
<keyword id="KW-0436">Ligase</keyword>
<keyword id="KW-0547">Nucleotide-binding</keyword>
<keyword id="KW-0648">Protein biosynthesis</keyword>
<dbReference type="EC" id="6.1.1.1" evidence="1"/>
<dbReference type="EMBL" id="CP000678">
    <property type="protein sequence ID" value="ABQ86718.1"/>
    <property type="molecule type" value="Genomic_DNA"/>
</dbReference>
<dbReference type="RefSeq" id="WP_004036710.1">
    <property type="nucleotide sequence ID" value="NZ_CP117965.1"/>
</dbReference>
<dbReference type="SMR" id="A5UKJ0"/>
<dbReference type="STRING" id="420247.Msm_0513"/>
<dbReference type="EnsemblBacteria" id="ABQ86718">
    <property type="protein sequence ID" value="ABQ86718"/>
    <property type="gene ID" value="Msm_0513"/>
</dbReference>
<dbReference type="KEGG" id="msi:Msm_0513"/>
<dbReference type="PATRIC" id="fig|420247.28.peg.512"/>
<dbReference type="eggNOG" id="arCOG01886">
    <property type="taxonomic scope" value="Archaea"/>
</dbReference>
<dbReference type="HOGENOM" id="CLU_035267_0_1_2"/>
<dbReference type="Proteomes" id="UP000001992">
    <property type="component" value="Chromosome"/>
</dbReference>
<dbReference type="GO" id="GO:0005737">
    <property type="term" value="C:cytoplasm"/>
    <property type="evidence" value="ECO:0007669"/>
    <property type="project" value="UniProtKB-SubCell"/>
</dbReference>
<dbReference type="GO" id="GO:0005524">
    <property type="term" value="F:ATP binding"/>
    <property type="evidence" value="ECO:0007669"/>
    <property type="project" value="UniProtKB-UniRule"/>
</dbReference>
<dbReference type="GO" id="GO:0004831">
    <property type="term" value="F:tyrosine-tRNA ligase activity"/>
    <property type="evidence" value="ECO:0007669"/>
    <property type="project" value="UniProtKB-UniRule"/>
</dbReference>
<dbReference type="GO" id="GO:0006437">
    <property type="term" value="P:tyrosyl-tRNA aminoacylation"/>
    <property type="evidence" value="ECO:0007669"/>
    <property type="project" value="UniProtKB-UniRule"/>
</dbReference>
<dbReference type="Gene3D" id="3.40.50.620">
    <property type="entry name" value="HUPs"/>
    <property type="match status" value="1"/>
</dbReference>
<dbReference type="Gene3D" id="1.10.240.10">
    <property type="entry name" value="Tyrosyl-Transfer RNA Synthetase"/>
    <property type="match status" value="1"/>
</dbReference>
<dbReference type="HAMAP" id="MF_02008">
    <property type="entry name" value="Tyr_tRNA_synth_type3"/>
    <property type="match status" value="1"/>
</dbReference>
<dbReference type="InterPro" id="IPR001412">
    <property type="entry name" value="aa-tRNA-synth_I_CS"/>
</dbReference>
<dbReference type="InterPro" id="IPR002305">
    <property type="entry name" value="aa-tRNA-synth_Ic"/>
</dbReference>
<dbReference type="InterPro" id="IPR014729">
    <property type="entry name" value="Rossmann-like_a/b/a_fold"/>
</dbReference>
<dbReference type="InterPro" id="IPR002307">
    <property type="entry name" value="Tyr-tRNA-ligase"/>
</dbReference>
<dbReference type="InterPro" id="IPR023684">
    <property type="entry name" value="Tyr-tRNA-ligase_3"/>
</dbReference>
<dbReference type="InterPro" id="IPR023617">
    <property type="entry name" value="Tyr-tRNA-ligase_arc/euk-type"/>
</dbReference>
<dbReference type="InterPro" id="IPR050489">
    <property type="entry name" value="Tyr-tRNA_synthase"/>
</dbReference>
<dbReference type="NCBIfam" id="NF006330">
    <property type="entry name" value="PRK08560.1"/>
    <property type="match status" value="1"/>
</dbReference>
<dbReference type="NCBIfam" id="TIGR00234">
    <property type="entry name" value="tyrS"/>
    <property type="match status" value="1"/>
</dbReference>
<dbReference type="PANTHER" id="PTHR46264:SF4">
    <property type="entry name" value="TYROSINE--TRNA LIGASE, CYTOPLASMIC"/>
    <property type="match status" value="1"/>
</dbReference>
<dbReference type="PANTHER" id="PTHR46264">
    <property type="entry name" value="TYROSINE-TRNA LIGASE"/>
    <property type="match status" value="1"/>
</dbReference>
<dbReference type="Pfam" id="PF00579">
    <property type="entry name" value="tRNA-synt_1b"/>
    <property type="match status" value="1"/>
</dbReference>
<dbReference type="PIRSF" id="PIRSF006588">
    <property type="entry name" value="TyrRS_arch_euk"/>
    <property type="match status" value="1"/>
</dbReference>
<dbReference type="PRINTS" id="PR01040">
    <property type="entry name" value="TRNASYNTHTYR"/>
</dbReference>
<dbReference type="SUPFAM" id="SSF52374">
    <property type="entry name" value="Nucleotidylyl transferase"/>
    <property type="match status" value="1"/>
</dbReference>
<dbReference type="PROSITE" id="PS00178">
    <property type="entry name" value="AA_TRNA_LIGASE_I"/>
    <property type="match status" value="1"/>
</dbReference>
<comment type="function">
    <text evidence="1">Catalyzes the attachment of tyrosine to tRNA(Tyr) in a two-step reaction: tyrosine is first activated by ATP to form Tyr-AMP and then transferred to the acceptor end of tRNA(Tyr).</text>
</comment>
<comment type="catalytic activity">
    <reaction evidence="1">
        <text>tRNA(Tyr) + L-tyrosine + ATP = L-tyrosyl-tRNA(Tyr) + AMP + diphosphate + H(+)</text>
        <dbReference type="Rhea" id="RHEA:10220"/>
        <dbReference type="Rhea" id="RHEA-COMP:9706"/>
        <dbReference type="Rhea" id="RHEA-COMP:9707"/>
        <dbReference type="ChEBI" id="CHEBI:15378"/>
        <dbReference type="ChEBI" id="CHEBI:30616"/>
        <dbReference type="ChEBI" id="CHEBI:33019"/>
        <dbReference type="ChEBI" id="CHEBI:58315"/>
        <dbReference type="ChEBI" id="CHEBI:78442"/>
        <dbReference type="ChEBI" id="CHEBI:78536"/>
        <dbReference type="ChEBI" id="CHEBI:456215"/>
        <dbReference type="EC" id="6.1.1.1"/>
    </reaction>
</comment>
<comment type="subunit">
    <text evidence="1">Homodimer.</text>
</comment>
<comment type="subcellular location">
    <subcellularLocation>
        <location evidence="1">Cytoplasm</location>
    </subcellularLocation>
</comment>
<comment type="similarity">
    <text evidence="1">Belongs to the class-I aminoacyl-tRNA synthetase family. TyrS type 3 subfamily.</text>
</comment>
<organism>
    <name type="scientific">Methanobrevibacter smithii (strain ATCC 35061 / DSM 861 / OCM 144 / PS)</name>
    <dbReference type="NCBI Taxonomy" id="420247"/>
    <lineage>
        <taxon>Archaea</taxon>
        <taxon>Methanobacteriati</taxon>
        <taxon>Methanobacteriota</taxon>
        <taxon>Methanomada group</taxon>
        <taxon>Methanobacteria</taxon>
        <taxon>Methanobacteriales</taxon>
        <taxon>Methanobacteriaceae</taxon>
        <taxon>Methanobrevibacter</taxon>
    </lineage>
</organism>
<sequence>MSIEEKIQLIEKGTLEVIDTEELKEVLKKEQPIAYTGYEPSGKIHLGHAVTVQKLKTLQKLGFKIKILLADFHAFLNGKGSIEEIAETAEYNMKCFKALGLDETTEFILGSSFQLNEDYASKVYKLATLTTLKRARRSMDQVSRHDENPKVASVVYPIMQTVDMVALDVDVALGGMEQRKIQMLARENLEKIDEKVPVCIHTPLLHGLDGDAKMSSSKGNYIAVDDSVEEITKKIKKSYCPQGETEGNPMIEIAETFVYPNQETLLIKRPEKFGGDIELTHEQLINDFSNGDLHPMDLKNGIKDFLIEHFAPVREYMEE</sequence>
<reference key="1">
    <citation type="journal article" date="2007" name="Proc. Natl. Acad. Sci. U.S.A.">
        <title>Genomic and metabolic adaptations of Methanobrevibacter smithii to the human gut.</title>
        <authorList>
            <person name="Samuel B.S."/>
            <person name="Hansen E.E."/>
            <person name="Manchester J.K."/>
            <person name="Coutinho P.M."/>
            <person name="Henrissat B."/>
            <person name="Fulton R."/>
            <person name="Latreille P."/>
            <person name="Kim K."/>
            <person name="Wilson R.K."/>
            <person name="Gordon J.I."/>
        </authorList>
    </citation>
    <scope>NUCLEOTIDE SEQUENCE [LARGE SCALE GENOMIC DNA]</scope>
    <source>
        <strain>ATCC 35061 / DSM 861 / OCM 144 / PS</strain>
    </source>
</reference>
<protein>
    <recommendedName>
        <fullName evidence="1">Tyrosine--tRNA ligase</fullName>
        <ecNumber evidence="1">6.1.1.1</ecNumber>
    </recommendedName>
    <alternativeName>
        <fullName evidence="1">Tyrosyl-tRNA synthetase</fullName>
        <shortName evidence="1">TyrRS</shortName>
    </alternativeName>
</protein>
<name>SYY_METS3</name>
<proteinExistence type="inferred from homology"/>
<accession>A5UKJ0</accession>
<gene>
    <name evidence="1" type="primary">tyrS</name>
    <name type="ordered locus">Msm_0513</name>
</gene>